<proteinExistence type="evidence at transcript level"/>
<evidence type="ECO:0000250" key="1">
    <source>
        <dbReference type="UniProtKB" id="P59213"/>
    </source>
</evidence>
<evidence type="ECO:0000305" key="2"/>
<gene>
    <name type="primary">malX</name>
    <name type="ordered locus">spr1918</name>
</gene>
<reference key="1">
    <citation type="journal article" date="1993" name="J. Mol. Biol.">
        <title>Structure of the maltodextrin-uptake locus of Streptococcus pneumoniae. Correlation to the Escherichia coli maltose regulon.</title>
        <authorList>
            <person name="Puyet A."/>
            <person name="Espinosa M."/>
        </authorList>
    </citation>
    <scope>NUCLEOTIDE SEQUENCE [GENOMIC DNA]</scope>
</reference>
<reference key="2">
    <citation type="journal article" date="1982" name="Cell">
        <title>Identification of base mismatches recognized by the heteroduplex-DNA-repair system of Streptococcus pneumoniae.</title>
        <authorList>
            <person name="Lacks S.A."/>
            <person name="Dunn J.J."/>
            <person name="Greenberg B."/>
        </authorList>
    </citation>
    <scope>NUCLEOTIDE SEQUENCE [GENOMIC DNA]</scope>
</reference>
<reference key="3">
    <citation type="journal article" date="2001" name="J. Bacteriol.">
        <title>Genome of the bacterium Streptococcus pneumoniae strain R6.</title>
        <authorList>
            <person name="Hoskins J."/>
            <person name="Alborn W.E. Jr."/>
            <person name="Arnold J."/>
            <person name="Blaszczak L.C."/>
            <person name="Burgett S."/>
            <person name="DeHoff B.S."/>
            <person name="Estrem S.T."/>
            <person name="Fritz L."/>
            <person name="Fu D.-J."/>
            <person name="Fuller W."/>
            <person name="Geringer C."/>
            <person name="Gilmour R."/>
            <person name="Glass J.S."/>
            <person name="Khoja H."/>
            <person name="Kraft A.R."/>
            <person name="Lagace R.E."/>
            <person name="LeBlanc D.J."/>
            <person name="Lee L.N."/>
            <person name="Lefkowitz E.J."/>
            <person name="Lu J."/>
            <person name="Matsushima P."/>
            <person name="McAhren S.M."/>
            <person name="McHenney M."/>
            <person name="McLeaster K."/>
            <person name="Mundy C.W."/>
            <person name="Nicas T.I."/>
            <person name="Norris F.H."/>
            <person name="O'Gara M."/>
            <person name="Peery R.B."/>
            <person name="Robertson G.T."/>
            <person name="Rockey P."/>
            <person name="Sun P.-M."/>
            <person name="Winkler M.E."/>
            <person name="Yang Y."/>
            <person name="Young-Bellido M."/>
            <person name="Zhao G."/>
            <person name="Zook C.A."/>
            <person name="Baltz R.H."/>
            <person name="Jaskunas S.R."/>
            <person name="Rosteck P.R. Jr."/>
            <person name="Skatrud P.L."/>
            <person name="Glass J.I."/>
        </authorList>
    </citation>
    <scope>NUCLEOTIDE SEQUENCE [LARGE SCALE GENOMIC DNA]</scope>
    <source>
        <strain>ATCC BAA-255 / R6</strain>
    </source>
</reference>
<comment type="function">
    <text evidence="1">Part of an ABC transporter complex involved in the uptake of maltodextrins. Binds glycogen-derived linear maltooligosaccharides increasing in size from maltotriose to maltooctaose with the highest affinity for maltotriose. Has a very weak affinity for maltose. Has also a very low affinity for maltotetraitol, indicating that the binding is selective for maltooligosaccharides with an intact reducing end.</text>
</comment>
<comment type="subcellular location">
    <subcellularLocation>
        <location evidence="2">Cell membrane</location>
        <topology evidence="2">Lipid-anchor</topology>
    </subcellularLocation>
</comment>
<comment type="induction">
    <text>By maltose.</text>
</comment>
<comment type="similarity">
    <text evidence="2">Belongs to the bacterial solute-binding protein 1 family.</text>
</comment>
<comment type="sequence caution" evidence="2">
    <conflict type="frameshift">
        <sequence resource="EMBL-CDS" id="AAA26922"/>
    </conflict>
</comment>
<feature type="signal peptide" evidence="2">
    <location>
        <begin position="1"/>
        <end position="24"/>
    </location>
</feature>
<feature type="chain" id="PRO_0000031699" description="Maltooligosaccharide ABC transporter solute-binding lipoprotein">
    <location>
        <begin position="25"/>
        <end position="423"/>
    </location>
</feature>
<feature type="binding site" evidence="1">
    <location>
        <position position="52"/>
    </location>
    <ligand>
        <name>substrate</name>
    </ligand>
</feature>
<feature type="binding site" evidence="1">
    <location>
        <position position="77"/>
    </location>
    <ligand>
        <name>substrate</name>
    </ligand>
</feature>
<feature type="binding site" evidence="1">
    <location>
        <position position="83"/>
    </location>
    <ligand>
        <name>substrate</name>
    </ligand>
</feature>
<feature type="binding site" evidence="1">
    <location>
        <begin position="103"/>
        <end position="104"/>
    </location>
    <ligand>
        <name>substrate</name>
    </ligand>
</feature>
<feature type="binding site" evidence="1">
    <location>
        <position position="148"/>
    </location>
    <ligand>
        <name>substrate</name>
    </ligand>
</feature>
<feature type="binding site" evidence="1">
    <location>
        <position position="193"/>
    </location>
    <ligand>
        <name>substrate</name>
    </ligand>
</feature>
<feature type="binding site" evidence="1">
    <location>
        <position position="196"/>
    </location>
    <ligand>
        <name>substrate</name>
    </ligand>
</feature>
<feature type="binding site" evidence="1">
    <location>
        <begin position="251"/>
        <end position="254"/>
    </location>
    <ligand>
        <name>substrate</name>
    </ligand>
</feature>
<feature type="binding site" evidence="1">
    <location>
        <position position="274"/>
    </location>
    <ligand>
        <name>substrate</name>
    </ligand>
</feature>
<feature type="binding site" evidence="1">
    <location>
        <position position="307"/>
    </location>
    <ligand>
        <name>substrate</name>
    </ligand>
</feature>
<feature type="lipid moiety-binding region" description="N-palmitoyl cysteine" evidence="2">
    <location>
        <position position="25"/>
    </location>
</feature>
<feature type="lipid moiety-binding region" description="S-diacylglycerol cysteine" evidence="2">
    <location>
        <position position="25"/>
    </location>
</feature>
<keyword id="KW-1003">Cell membrane</keyword>
<keyword id="KW-0449">Lipoprotein</keyword>
<keyword id="KW-0472">Membrane</keyword>
<keyword id="KW-0564">Palmitate</keyword>
<keyword id="KW-1185">Reference proteome</keyword>
<keyword id="KW-0732">Signal</keyword>
<keyword id="KW-0762">Sugar transport</keyword>
<keyword id="KW-0813">Transport</keyword>
<protein>
    <recommendedName>
        <fullName evidence="2">Maltooligosaccharide ABC transporter solute-binding lipoprotein</fullName>
    </recommendedName>
    <alternativeName>
        <fullName evidence="2">Maltodextrin-binding protein</fullName>
    </alternativeName>
    <alternativeName>
        <fullName evidence="2">Solute-binding protein MalX</fullName>
    </alternativeName>
</protein>
<accession>P59214</accession>
<accession>P29850</accession>
<name>MALX_STRR6</name>
<organism>
    <name type="scientific">Streptococcus pneumoniae (strain ATCC BAA-255 / R6)</name>
    <dbReference type="NCBI Taxonomy" id="171101"/>
    <lineage>
        <taxon>Bacteria</taxon>
        <taxon>Bacillati</taxon>
        <taxon>Bacillota</taxon>
        <taxon>Bacilli</taxon>
        <taxon>Lactobacillales</taxon>
        <taxon>Streptococcaceae</taxon>
        <taxon>Streptococcus</taxon>
    </lineage>
</organism>
<sequence>MSSKFMKSTAVLGTVTLASLLLVACGSKTADKPADSGSSEVKELTVYVDEGYKSYIEEVAKAYEKEAGVKVTLKTGDALGGLDKLSLDNQSGNVPDVMMAPYDRVGSLGSDGQLSEVKLSDGAKTDDTTKSLVTAANGKVYGAPAVIESLVMYYNKDLVKDAPKTFADLENLAKDSKYAFAGEDGKTTAFLADWTNFYYTYGLLAGNGAYVFGQNGKDAKDIGLANDGSIAGINYAKSWYEKWPKGMQDTEGAGNLIQTQFQEGKTAAIIDGPWKAQAFKDAKVNYGVATIPTLPNGKEYAAFGGGKAWVIPQAVKNLEASQKFVDFLVATEQQKVLYDKTNEIPANTEARSYAEGKNDELTTAVIKQFKNTQPLPNISQMSAVWDPAKNMLFDAVSGQKDAKTAANDAVTLIKETIKQKFGE</sequence>
<dbReference type="EMBL" id="L08611">
    <property type="protein sequence ID" value="AAA26925.1"/>
    <property type="molecule type" value="Genomic_DNA"/>
</dbReference>
<dbReference type="EMBL" id="J01796">
    <property type="protein sequence ID" value="AAA26922.1"/>
    <property type="status" value="ALT_FRAME"/>
    <property type="molecule type" value="Genomic_DNA"/>
</dbReference>
<dbReference type="EMBL" id="AE007317">
    <property type="protein sequence ID" value="AAL00720.1"/>
    <property type="molecule type" value="Genomic_DNA"/>
</dbReference>
<dbReference type="PIR" id="C98111">
    <property type="entry name" value="C98111"/>
</dbReference>
<dbReference type="PIR" id="S32569">
    <property type="entry name" value="S32569"/>
</dbReference>
<dbReference type="RefSeq" id="NP_359509.1">
    <property type="nucleotide sequence ID" value="NC_003098.1"/>
</dbReference>
<dbReference type="RefSeq" id="WP_000095484.1">
    <property type="nucleotide sequence ID" value="NC_003098.1"/>
</dbReference>
<dbReference type="SMR" id="P59214"/>
<dbReference type="STRING" id="171101.spr1918"/>
<dbReference type="KEGG" id="spr:spr1918"/>
<dbReference type="PATRIC" id="fig|171101.6.peg.2067"/>
<dbReference type="eggNOG" id="COG2182">
    <property type="taxonomic scope" value="Bacteria"/>
</dbReference>
<dbReference type="HOGENOM" id="CLU_031285_17_2_9"/>
<dbReference type="Proteomes" id="UP000000586">
    <property type="component" value="Chromosome"/>
</dbReference>
<dbReference type="GO" id="GO:0055052">
    <property type="term" value="C:ATP-binding cassette (ABC) transporter complex, substrate-binding subunit-containing"/>
    <property type="evidence" value="ECO:0000318"/>
    <property type="project" value="GO_Central"/>
</dbReference>
<dbReference type="GO" id="GO:0015144">
    <property type="term" value="F:carbohydrate transmembrane transporter activity"/>
    <property type="evidence" value="ECO:0007669"/>
    <property type="project" value="InterPro"/>
</dbReference>
<dbReference type="GO" id="GO:2001071">
    <property type="term" value="F:maltoheptaose binding"/>
    <property type="evidence" value="ECO:0000250"/>
    <property type="project" value="UniProtKB"/>
</dbReference>
<dbReference type="GO" id="GO:1901982">
    <property type="term" value="F:maltose binding"/>
    <property type="evidence" value="ECO:0000318"/>
    <property type="project" value="GO_Central"/>
</dbReference>
<dbReference type="GO" id="GO:0042956">
    <property type="term" value="P:maltodextrin transmembrane transport"/>
    <property type="evidence" value="ECO:0000250"/>
    <property type="project" value="UniProtKB"/>
</dbReference>
<dbReference type="GO" id="GO:0015768">
    <property type="term" value="P:maltose transport"/>
    <property type="evidence" value="ECO:0000318"/>
    <property type="project" value="GO_Central"/>
</dbReference>
<dbReference type="CDD" id="cd13658">
    <property type="entry name" value="PBP2_CMBP"/>
    <property type="match status" value="1"/>
</dbReference>
<dbReference type="Gene3D" id="3.40.190.10">
    <property type="entry name" value="Periplasmic binding protein-like II"/>
    <property type="match status" value="2"/>
</dbReference>
<dbReference type="InterPro" id="IPR006060">
    <property type="entry name" value="Maltose/Cyclodextrin-bd"/>
</dbReference>
<dbReference type="InterPro" id="IPR006059">
    <property type="entry name" value="SBP"/>
</dbReference>
<dbReference type="InterPro" id="IPR006061">
    <property type="entry name" value="SBP_1_CS"/>
</dbReference>
<dbReference type="PANTHER" id="PTHR30061">
    <property type="entry name" value="MALTOSE-BINDING PERIPLASMIC PROTEIN"/>
    <property type="match status" value="1"/>
</dbReference>
<dbReference type="PANTHER" id="PTHR30061:SF50">
    <property type="entry name" value="MALTOSE_MALTODEXTRIN-BINDING PERIPLASMIC PROTEIN"/>
    <property type="match status" value="1"/>
</dbReference>
<dbReference type="Pfam" id="PF13416">
    <property type="entry name" value="SBP_bac_8"/>
    <property type="match status" value="1"/>
</dbReference>
<dbReference type="PRINTS" id="PR00181">
    <property type="entry name" value="MALTOSEBP"/>
</dbReference>
<dbReference type="SUPFAM" id="SSF53850">
    <property type="entry name" value="Periplasmic binding protein-like II"/>
    <property type="match status" value="1"/>
</dbReference>
<dbReference type="PROSITE" id="PS51257">
    <property type="entry name" value="PROKAR_LIPOPROTEIN"/>
    <property type="match status" value="1"/>
</dbReference>
<dbReference type="PROSITE" id="PS01037">
    <property type="entry name" value="SBP_BACTERIAL_1"/>
    <property type="match status" value="1"/>
</dbReference>